<accession>P51073</accession>
<protein>
    <recommendedName>
        <fullName>Uncharacterized protein RJ39</fullName>
    </recommendedName>
</protein>
<feature type="chain" id="PRO_0000097355" description="Uncharacterized protein RJ39">
    <location>
        <begin position="1" status="less than"/>
        <end position="88"/>
    </location>
</feature>
<feature type="region of interest" description="Disordered" evidence="1">
    <location>
        <begin position="1"/>
        <end position="54"/>
    </location>
</feature>
<feature type="compositionally biased region" description="Acidic residues" evidence="1">
    <location>
        <begin position="16"/>
        <end position="53"/>
    </location>
</feature>
<feature type="non-terminal residue">
    <location>
        <position position="1"/>
    </location>
</feature>
<sequence>AVDAYDDDDNLKNEEGDYYNESDDGYSGDEEEEEKQEEDEQDDDDLQFDDGVPEDPISTLKCFSFNSVGTGSPCIFGVPVPAIRQVHS</sequence>
<name>RJ39_FRAAN</name>
<reference key="1">
    <citation type="journal article" date="1995" name="Plant Mol. Biol.">
        <title>Identification of mRNAs with enhanced expression in ripening strawberry fruit using polymerase chain reaction differential display.</title>
        <authorList>
            <person name="Wilkinson J.Q."/>
            <person name="Lanahan M.B."/>
            <person name="Conner T.W."/>
            <person name="Klee H.J."/>
        </authorList>
    </citation>
    <scope>NUCLEOTIDE SEQUENCE [MRNA]</scope>
    <source>
        <strain>cv. Pajaro</strain>
        <tissue>Fruit</tissue>
    </source>
</reference>
<dbReference type="EMBL" id="U19944">
    <property type="protein sequence ID" value="AAA79925.1"/>
    <property type="molecule type" value="mRNA"/>
</dbReference>
<dbReference type="PIR" id="S56677">
    <property type="entry name" value="S56677"/>
</dbReference>
<evidence type="ECO:0000256" key="1">
    <source>
        <dbReference type="SAM" id="MobiDB-lite"/>
    </source>
</evidence>
<comment type="tissue specificity">
    <text>Predominantly in developing fruit.</text>
</comment>
<comment type="developmental stage">
    <text>Expression of the protein is enhanced in a ripening fruit.</text>
</comment>
<proteinExistence type="evidence at transcript level"/>
<organism>
    <name type="scientific">Fragaria ananassa</name>
    <name type="common">Strawberry</name>
    <name type="synonym">Fragaria chiloensis x Fragaria virginiana</name>
    <dbReference type="NCBI Taxonomy" id="3747"/>
    <lineage>
        <taxon>Eukaryota</taxon>
        <taxon>Viridiplantae</taxon>
        <taxon>Streptophyta</taxon>
        <taxon>Embryophyta</taxon>
        <taxon>Tracheophyta</taxon>
        <taxon>Spermatophyta</taxon>
        <taxon>Magnoliopsida</taxon>
        <taxon>eudicotyledons</taxon>
        <taxon>Gunneridae</taxon>
        <taxon>Pentapetalae</taxon>
        <taxon>rosids</taxon>
        <taxon>fabids</taxon>
        <taxon>Rosales</taxon>
        <taxon>Rosaceae</taxon>
        <taxon>Rosoideae</taxon>
        <taxon>Potentilleae</taxon>
        <taxon>Fragariinae</taxon>
        <taxon>Fragaria</taxon>
    </lineage>
</organism>